<dbReference type="EC" id="1.6.5.-" evidence="1"/>
<dbReference type="EC" id="1.7.1.17" evidence="1"/>
<dbReference type="EMBL" id="U20964">
    <property type="protein sequence ID" value="AAC43728.1"/>
    <property type="molecule type" value="Genomic_DNA"/>
</dbReference>
<dbReference type="EMBL" id="L42023">
    <property type="protein sequence ID" value="AAC23013.1"/>
    <property type="molecule type" value="Genomic_DNA"/>
</dbReference>
<dbReference type="PIR" id="G64026">
    <property type="entry name" value="G64026"/>
</dbReference>
<dbReference type="RefSeq" id="NP_439517.1">
    <property type="nucleotide sequence ID" value="NC_000907.1"/>
</dbReference>
<dbReference type="SMR" id="P43013"/>
<dbReference type="EnsemblBacteria" id="AAC23013">
    <property type="protein sequence ID" value="AAC23013"/>
    <property type="gene ID" value="HI_1366"/>
</dbReference>
<dbReference type="KEGG" id="hin:HI_1366"/>
<dbReference type="PATRIC" id="fig|71421.8.peg.1420"/>
<dbReference type="eggNOG" id="COG1182">
    <property type="taxonomic scope" value="Bacteria"/>
</dbReference>
<dbReference type="HOGENOM" id="CLU_088964_0_0_6"/>
<dbReference type="OrthoDB" id="9787136at2"/>
<dbReference type="PhylomeDB" id="P43013"/>
<dbReference type="BioCyc" id="HINF71421:G1GJ1-1391-MONOMER"/>
<dbReference type="Proteomes" id="UP000000579">
    <property type="component" value="Chromosome"/>
</dbReference>
<dbReference type="GO" id="GO:0009055">
    <property type="term" value="F:electron transfer activity"/>
    <property type="evidence" value="ECO:0007669"/>
    <property type="project" value="UniProtKB-UniRule"/>
</dbReference>
<dbReference type="GO" id="GO:0010181">
    <property type="term" value="F:FMN binding"/>
    <property type="evidence" value="ECO:0007669"/>
    <property type="project" value="UniProtKB-UniRule"/>
</dbReference>
<dbReference type="GO" id="GO:0016652">
    <property type="term" value="F:oxidoreductase activity, acting on NAD(P)H as acceptor"/>
    <property type="evidence" value="ECO:0007669"/>
    <property type="project" value="UniProtKB-UniRule"/>
</dbReference>
<dbReference type="GO" id="GO:0016655">
    <property type="term" value="F:oxidoreductase activity, acting on NAD(P)H, quinone or similar compound as acceptor"/>
    <property type="evidence" value="ECO:0007669"/>
    <property type="project" value="InterPro"/>
</dbReference>
<dbReference type="Gene3D" id="3.40.50.360">
    <property type="match status" value="1"/>
</dbReference>
<dbReference type="HAMAP" id="MF_01216">
    <property type="entry name" value="Azoreductase_type1"/>
    <property type="match status" value="1"/>
</dbReference>
<dbReference type="InterPro" id="IPR003680">
    <property type="entry name" value="Flavodoxin_fold"/>
</dbReference>
<dbReference type="InterPro" id="IPR029039">
    <property type="entry name" value="Flavoprotein-like_sf"/>
</dbReference>
<dbReference type="InterPro" id="IPR050104">
    <property type="entry name" value="FMN-dep_NADH:Q_OxRdtase_AzoR1"/>
</dbReference>
<dbReference type="InterPro" id="IPR023048">
    <property type="entry name" value="NADH:quinone_OxRdtase_FMN_depd"/>
</dbReference>
<dbReference type="PANTHER" id="PTHR43741">
    <property type="entry name" value="FMN-DEPENDENT NADH-AZOREDUCTASE 1"/>
    <property type="match status" value="1"/>
</dbReference>
<dbReference type="PANTHER" id="PTHR43741:SF2">
    <property type="entry name" value="FMN-DEPENDENT NADH:QUINONE OXIDOREDUCTASE"/>
    <property type="match status" value="1"/>
</dbReference>
<dbReference type="Pfam" id="PF02525">
    <property type="entry name" value="Flavodoxin_2"/>
    <property type="match status" value="1"/>
</dbReference>
<dbReference type="SUPFAM" id="SSF52218">
    <property type="entry name" value="Flavoproteins"/>
    <property type="match status" value="1"/>
</dbReference>
<accession>P43013</accession>
<proteinExistence type="inferred from homology"/>
<sequence length="194" mass="21208">MSNVLVLKSSISGNNSQTNQLADYVIEKLQGNNIVVRDLSQQPLPYFDTAAAIAVRGEPKTTEEKQLLALSDKLIEELKNAQTLIIGAPMYNLNVPTQLKSYFDFIARPRVTFQYTANGSEGLLKGKKAILLCAFGGLYDEENLVTQYMKSILGFIGITDVQFVYAQGIGFGPEAIEKAQASAKNKINEIVAAL</sequence>
<reference key="1">
    <citation type="journal article" date="1996" name="Gene">
        <title>Characterization of the Haemophilus influenzae topA locus: DNA topoisomerase I is required for genetic competence.</title>
        <authorList>
            <person name="Chandler M.S."/>
            <person name="Smith R.A."/>
        </authorList>
    </citation>
    <scope>NUCLEOTIDE SEQUENCE [GENOMIC DNA]</scope>
    <source>
        <strain>ATCC 51907 / DSM 11121 / KW20 / Rd</strain>
    </source>
</reference>
<reference key="2">
    <citation type="journal article" date="1995" name="Science">
        <title>Whole-genome random sequencing and assembly of Haemophilus influenzae Rd.</title>
        <authorList>
            <person name="Fleischmann R.D."/>
            <person name="Adams M.D."/>
            <person name="White O."/>
            <person name="Clayton R.A."/>
            <person name="Kirkness E.F."/>
            <person name="Kerlavage A.R."/>
            <person name="Bult C.J."/>
            <person name="Tomb J.-F."/>
            <person name="Dougherty B.A."/>
            <person name="Merrick J.M."/>
            <person name="McKenney K."/>
            <person name="Sutton G.G."/>
            <person name="FitzHugh W."/>
            <person name="Fields C.A."/>
            <person name="Gocayne J.D."/>
            <person name="Scott J.D."/>
            <person name="Shirley R."/>
            <person name="Liu L.-I."/>
            <person name="Glodek A."/>
            <person name="Kelley J.M."/>
            <person name="Weidman J.F."/>
            <person name="Phillips C.A."/>
            <person name="Spriggs T."/>
            <person name="Hedblom E."/>
            <person name="Cotton M.D."/>
            <person name="Utterback T.R."/>
            <person name="Hanna M.C."/>
            <person name="Nguyen D.T."/>
            <person name="Saudek D.M."/>
            <person name="Brandon R.C."/>
            <person name="Fine L.D."/>
            <person name="Fritchman J.L."/>
            <person name="Fuhrmann J.L."/>
            <person name="Geoghagen N.S.M."/>
            <person name="Gnehm C.L."/>
            <person name="McDonald L.A."/>
            <person name="Small K.V."/>
            <person name="Fraser C.M."/>
            <person name="Smith H.O."/>
            <person name="Venter J.C."/>
        </authorList>
    </citation>
    <scope>NUCLEOTIDE SEQUENCE [LARGE SCALE GENOMIC DNA]</scope>
    <source>
        <strain>ATCC 51907 / DSM 11121 / KW20 / Rd</strain>
    </source>
</reference>
<feature type="chain" id="PRO_0000166320" description="FMN-dependent NADH:quinone oxidoreductase">
    <location>
        <begin position="1"/>
        <end position="194"/>
    </location>
</feature>
<feature type="binding site" evidence="1">
    <location>
        <position position="10"/>
    </location>
    <ligand>
        <name>FMN</name>
        <dbReference type="ChEBI" id="CHEBI:58210"/>
    </ligand>
</feature>
<feature type="binding site" evidence="1">
    <location>
        <begin position="90"/>
        <end position="93"/>
    </location>
    <ligand>
        <name>FMN</name>
        <dbReference type="ChEBI" id="CHEBI:58210"/>
    </ligand>
</feature>
<comment type="function">
    <text evidence="1">Quinone reductase that provides resistance to thiol-specific stress caused by electrophilic quinones.</text>
</comment>
<comment type="function">
    <text evidence="1">Also exhibits azoreductase activity. Catalyzes the reductive cleavage of the azo bond in aromatic azo compounds to the corresponding amines.</text>
</comment>
<comment type="catalytic activity">
    <reaction evidence="1">
        <text>2 a quinone + NADH + H(+) = 2 a 1,4-benzosemiquinone + NAD(+)</text>
        <dbReference type="Rhea" id="RHEA:65952"/>
        <dbReference type="ChEBI" id="CHEBI:15378"/>
        <dbReference type="ChEBI" id="CHEBI:57540"/>
        <dbReference type="ChEBI" id="CHEBI:57945"/>
        <dbReference type="ChEBI" id="CHEBI:132124"/>
        <dbReference type="ChEBI" id="CHEBI:134225"/>
    </reaction>
</comment>
<comment type="catalytic activity">
    <reaction evidence="1">
        <text>N,N-dimethyl-1,4-phenylenediamine + anthranilate + 2 NAD(+) = 2-(4-dimethylaminophenyl)diazenylbenzoate + 2 NADH + 2 H(+)</text>
        <dbReference type="Rhea" id="RHEA:55872"/>
        <dbReference type="ChEBI" id="CHEBI:15378"/>
        <dbReference type="ChEBI" id="CHEBI:15783"/>
        <dbReference type="ChEBI" id="CHEBI:16567"/>
        <dbReference type="ChEBI" id="CHEBI:57540"/>
        <dbReference type="ChEBI" id="CHEBI:57945"/>
        <dbReference type="ChEBI" id="CHEBI:71579"/>
        <dbReference type="EC" id="1.7.1.17"/>
    </reaction>
</comment>
<comment type="cofactor">
    <cofactor evidence="1">
        <name>FMN</name>
        <dbReference type="ChEBI" id="CHEBI:58210"/>
    </cofactor>
    <text evidence="1">Binds 1 FMN per subunit.</text>
</comment>
<comment type="subunit">
    <text evidence="1">Homodimer.</text>
</comment>
<comment type="similarity">
    <text evidence="1">Belongs to the azoreductase type 1 family.</text>
</comment>
<protein>
    <recommendedName>
        <fullName evidence="1">FMN-dependent NADH:quinone oxidoreductase</fullName>
        <ecNumber evidence="1">1.6.5.-</ecNumber>
    </recommendedName>
    <alternativeName>
        <fullName evidence="1">Azo-dye reductase</fullName>
    </alternativeName>
    <alternativeName>
        <fullName evidence="1">FMN-dependent NADH-azo compound oxidoreductase</fullName>
    </alternativeName>
    <alternativeName>
        <fullName evidence="1">FMN-dependent NADH-azoreductase</fullName>
        <ecNumber evidence="1">1.7.1.17</ecNumber>
    </alternativeName>
</protein>
<evidence type="ECO:0000255" key="1">
    <source>
        <dbReference type="HAMAP-Rule" id="MF_01216"/>
    </source>
</evidence>
<keyword id="KW-0285">Flavoprotein</keyword>
<keyword id="KW-0288">FMN</keyword>
<keyword id="KW-0520">NAD</keyword>
<keyword id="KW-0560">Oxidoreductase</keyword>
<keyword id="KW-1185">Reference proteome</keyword>
<gene>
    <name evidence="1" type="primary">azoR</name>
    <name type="ordered locus">HI_1366</name>
</gene>
<name>AZOR_HAEIN</name>
<organism>
    <name type="scientific">Haemophilus influenzae (strain ATCC 51907 / DSM 11121 / KW20 / Rd)</name>
    <dbReference type="NCBI Taxonomy" id="71421"/>
    <lineage>
        <taxon>Bacteria</taxon>
        <taxon>Pseudomonadati</taxon>
        <taxon>Pseudomonadota</taxon>
        <taxon>Gammaproteobacteria</taxon>
        <taxon>Pasteurellales</taxon>
        <taxon>Pasteurellaceae</taxon>
        <taxon>Haemophilus</taxon>
    </lineage>
</organism>